<dbReference type="EMBL" id="AK131504">
    <property type="protein sequence ID" value="BAD18648.1"/>
    <property type="molecule type" value="mRNA"/>
</dbReference>
<dbReference type="EMBL" id="AC004890">
    <property type="status" value="NOT_ANNOTATED_CDS"/>
    <property type="molecule type" value="Genomic_DNA"/>
</dbReference>
<dbReference type="CCDS" id="CCDS56519.1">
    <molecule id="Q6ZMS7-2"/>
</dbReference>
<dbReference type="RefSeq" id="NP_001182149.1">
    <molecule id="Q6ZMS7-2"/>
    <property type="nucleotide sequence ID" value="NM_001195220.2"/>
</dbReference>
<dbReference type="SMR" id="Q6ZMS7"/>
<dbReference type="BioGRID" id="941329">
    <property type="interactions" value="11"/>
</dbReference>
<dbReference type="FunCoup" id="Q6ZMS7">
    <property type="interactions" value="182"/>
</dbReference>
<dbReference type="IntAct" id="Q6ZMS7">
    <property type="interactions" value="9"/>
</dbReference>
<dbReference type="STRING" id="9606.ENSP00000410890"/>
<dbReference type="iPTMnet" id="Q6ZMS7"/>
<dbReference type="PhosphoSitePlus" id="Q6ZMS7"/>
<dbReference type="BioMuta" id="ZNF783"/>
<dbReference type="DMDM" id="74722910"/>
<dbReference type="jPOST" id="Q6ZMS7"/>
<dbReference type="MassIVE" id="Q6ZMS7"/>
<dbReference type="PaxDb" id="9606-ENSP00000410890"/>
<dbReference type="PeptideAtlas" id="Q6ZMS7"/>
<dbReference type="Antibodypedia" id="10415">
    <property type="antibodies" value="68 antibodies from 10 providers"/>
</dbReference>
<dbReference type="DNASU" id="100289678"/>
<dbReference type="Ensembl" id="ENST00000378052.5">
    <molecule id="Q6ZMS7-1"/>
    <property type="protein sequence ID" value="ENSP00000367291.1"/>
    <property type="gene ID" value="ENSG00000204946.10"/>
</dbReference>
<dbReference type="Ensembl" id="ENST00000434415.6">
    <molecule id="Q6ZMS7-2"/>
    <property type="protein sequence ID" value="ENSP00000410890.1"/>
    <property type="gene ID" value="ENSG00000204946.10"/>
</dbReference>
<dbReference type="Ensembl" id="ENST00000476295.5">
    <molecule id="Q6ZMS7-1"/>
    <property type="protein sequence ID" value="ENSP00000418666.1"/>
    <property type="gene ID" value="ENSG00000204946.10"/>
</dbReference>
<dbReference type="GeneID" id="100289678"/>
<dbReference type="KEGG" id="hsa:100289678"/>
<dbReference type="MANE-Select" id="ENST00000434415.6">
    <property type="protein sequence ID" value="ENSP00000410890.1"/>
    <property type="RefSeq nucleotide sequence ID" value="NM_001195220.2"/>
    <property type="RefSeq protein sequence ID" value="NP_001182149.1"/>
</dbReference>
<dbReference type="UCSC" id="uc011kuo.3">
    <molecule id="Q6ZMS7-2"/>
    <property type="organism name" value="human"/>
</dbReference>
<dbReference type="AGR" id="HGNC:27222"/>
<dbReference type="CTD" id="100289678"/>
<dbReference type="DisGeNET" id="100289678"/>
<dbReference type="GeneCards" id="ZNF783"/>
<dbReference type="HGNC" id="HGNC:27222">
    <property type="gene designation" value="ZNF783"/>
</dbReference>
<dbReference type="HPA" id="ENSG00000204946">
    <property type="expression patterns" value="Low tissue specificity"/>
</dbReference>
<dbReference type="neXtProt" id="NX_Q6ZMS7"/>
<dbReference type="OpenTargets" id="ENSG00000204946"/>
<dbReference type="PharmGKB" id="PA162410441"/>
<dbReference type="VEuPathDB" id="HostDB:ENSG00000204946"/>
<dbReference type="eggNOG" id="KOG1721">
    <property type="taxonomic scope" value="Eukaryota"/>
</dbReference>
<dbReference type="GeneTree" id="ENSGT00940000162942"/>
<dbReference type="HOGENOM" id="CLU_002678_76_3_1"/>
<dbReference type="InParanoid" id="Q6ZMS7"/>
<dbReference type="OMA" id="WPSRKEE"/>
<dbReference type="OrthoDB" id="654211at2759"/>
<dbReference type="PAN-GO" id="Q6ZMS7">
    <property type="GO annotations" value="3 GO annotations based on evolutionary models"/>
</dbReference>
<dbReference type="PhylomeDB" id="Q6ZMS7"/>
<dbReference type="TreeFam" id="TF337777"/>
<dbReference type="PathwayCommons" id="Q6ZMS7"/>
<dbReference type="SignaLink" id="Q6ZMS7"/>
<dbReference type="BioGRID-ORCS" id="100289678">
    <property type="hits" value="14 hits in 1174 CRISPR screens"/>
</dbReference>
<dbReference type="ChiTaRS" id="ZNF783">
    <property type="organism name" value="human"/>
</dbReference>
<dbReference type="GenomeRNAi" id="100289678"/>
<dbReference type="Pharos" id="Q6ZMS7">
    <property type="development level" value="Tdark"/>
</dbReference>
<dbReference type="PRO" id="PR:Q6ZMS7"/>
<dbReference type="Proteomes" id="UP000005640">
    <property type="component" value="Chromosome 7"/>
</dbReference>
<dbReference type="RNAct" id="Q6ZMS7">
    <property type="molecule type" value="protein"/>
</dbReference>
<dbReference type="Bgee" id="ENSG00000204946">
    <property type="expression patterns" value="Expressed in pancreatic ductal cell and 170 other cell types or tissues"/>
</dbReference>
<dbReference type="GO" id="GO:0005634">
    <property type="term" value="C:nucleus"/>
    <property type="evidence" value="ECO:0007669"/>
    <property type="project" value="UniProtKB-SubCell"/>
</dbReference>
<dbReference type="GO" id="GO:0003677">
    <property type="term" value="F:DNA binding"/>
    <property type="evidence" value="ECO:0007669"/>
    <property type="project" value="UniProtKB-KW"/>
</dbReference>
<dbReference type="GO" id="GO:0003700">
    <property type="term" value="F:DNA-binding transcription factor activity"/>
    <property type="evidence" value="ECO:0000303"/>
    <property type="project" value="ARUK-UCL"/>
</dbReference>
<dbReference type="GO" id="GO:0042802">
    <property type="term" value="F:identical protein binding"/>
    <property type="evidence" value="ECO:0000353"/>
    <property type="project" value="IntAct"/>
</dbReference>
<dbReference type="GO" id="GO:0008270">
    <property type="term" value="F:zinc ion binding"/>
    <property type="evidence" value="ECO:0007669"/>
    <property type="project" value="UniProtKB-KW"/>
</dbReference>
<dbReference type="CDD" id="cd07765">
    <property type="entry name" value="KRAB_A-box"/>
    <property type="match status" value="1"/>
</dbReference>
<dbReference type="FunFam" id="3.30.160.60:FF:000363">
    <property type="entry name" value="Zinc finger protein 239"/>
    <property type="match status" value="1"/>
</dbReference>
<dbReference type="FunFam" id="3.30.160.60:FF:000624">
    <property type="entry name" value="zinc finger protein 697"/>
    <property type="match status" value="1"/>
</dbReference>
<dbReference type="FunFam" id="3.30.160.60:FF:000496">
    <property type="entry name" value="Zinc finger with KRAB and SCAN domains 1"/>
    <property type="match status" value="1"/>
</dbReference>
<dbReference type="Gene3D" id="6.10.140.140">
    <property type="match status" value="1"/>
</dbReference>
<dbReference type="Gene3D" id="3.30.160.60">
    <property type="entry name" value="Classic Zinc Finger"/>
    <property type="match status" value="4"/>
</dbReference>
<dbReference type="InterPro" id="IPR003655">
    <property type="entry name" value="aKRAB"/>
</dbReference>
<dbReference type="InterPro" id="IPR001909">
    <property type="entry name" value="KRAB"/>
</dbReference>
<dbReference type="InterPro" id="IPR036051">
    <property type="entry name" value="KRAB_dom_sf"/>
</dbReference>
<dbReference type="InterPro" id="IPR036236">
    <property type="entry name" value="Znf_C2H2_sf"/>
</dbReference>
<dbReference type="InterPro" id="IPR013087">
    <property type="entry name" value="Znf_C2H2_type"/>
</dbReference>
<dbReference type="PANTHER" id="PTHR24381">
    <property type="entry name" value="ZINC FINGER PROTEIN"/>
    <property type="match status" value="1"/>
</dbReference>
<dbReference type="PANTHER" id="PTHR24381:SF269">
    <property type="entry name" value="ZINC FINGER PROTEIN 398"/>
    <property type="match status" value="1"/>
</dbReference>
<dbReference type="Pfam" id="PF01352">
    <property type="entry name" value="KRAB"/>
    <property type="match status" value="1"/>
</dbReference>
<dbReference type="Pfam" id="PF00096">
    <property type="entry name" value="zf-C2H2"/>
    <property type="match status" value="3"/>
</dbReference>
<dbReference type="SMART" id="SM00349">
    <property type="entry name" value="KRAB"/>
    <property type="match status" value="1"/>
</dbReference>
<dbReference type="SMART" id="SM00355">
    <property type="entry name" value="ZnF_C2H2"/>
    <property type="match status" value="4"/>
</dbReference>
<dbReference type="SUPFAM" id="SSF57667">
    <property type="entry name" value="beta-beta-alpha zinc fingers"/>
    <property type="match status" value="3"/>
</dbReference>
<dbReference type="SUPFAM" id="SSF109640">
    <property type="entry name" value="KRAB domain (Kruppel-associated box)"/>
    <property type="match status" value="1"/>
</dbReference>
<dbReference type="PROSITE" id="PS50805">
    <property type="entry name" value="KRAB"/>
    <property type="match status" value="1"/>
</dbReference>
<dbReference type="PROSITE" id="PS00028">
    <property type="entry name" value="ZINC_FINGER_C2H2_1"/>
    <property type="match status" value="4"/>
</dbReference>
<dbReference type="PROSITE" id="PS50157">
    <property type="entry name" value="ZINC_FINGER_C2H2_2"/>
    <property type="match status" value="4"/>
</dbReference>
<proteinExistence type="evidence at protein level"/>
<accession>Q6ZMS7</accession>
<accession>C9J9J2</accession>
<organism>
    <name type="scientific">Homo sapiens</name>
    <name type="common">Human</name>
    <dbReference type="NCBI Taxonomy" id="9606"/>
    <lineage>
        <taxon>Eukaryota</taxon>
        <taxon>Metazoa</taxon>
        <taxon>Chordata</taxon>
        <taxon>Craniata</taxon>
        <taxon>Vertebrata</taxon>
        <taxon>Euteleostomi</taxon>
        <taxon>Mammalia</taxon>
        <taxon>Eutheria</taxon>
        <taxon>Euarchontoglires</taxon>
        <taxon>Primates</taxon>
        <taxon>Haplorrhini</taxon>
        <taxon>Catarrhini</taxon>
        <taxon>Hominidae</taxon>
        <taxon>Homo</taxon>
    </lineage>
</organism>
<feature type="initiator methionine" description="Removed" evidence="8">
    <location>
        <position position="1"/>
    </location>
</feature>
<feature type="chain" id="PRO_0000270995" description="Zinc finger protein 783">
    <location>
        <begin position="2"/>
        <end position="546"/>
    </location>
</feature>
<feature type="domain" description="KRAB" evidence="3">
    <location>
        <begin position="143"/>
        <end position="214"/>
    </location>
</feature>
<feature type="zinc finger region" description="C2H2-type 1" evidence="2">
    <location>
        <begin position="349"/>
        <end position="371"/>
    </location>
</feature>
<feature type="zinc finger region" description="C2H2-type 2" evidence="2">
    <location>
        <begin position="436"/>
        <end position="458"/>
    </location>
</feature>
<feature type="zinc finger region" description="C2H2-type 3" evidence="2">
    <location>
        <begin position="466"/>
        <end position="488"/>
    </location>
</feature>
<feature type="zinc finger region" description="C2H2-type 4" evidence="2">
    <location>
        <begin position="494"/>
        <end position="516"/>
    </location>
</feature>
<feature type="region of interest" description="Disordered" evidence="4">
    <location>
        <begin position="1"/>
        <end position="30"/>
    </location>
</feature>
<feature type="region of interest" description="Disordered" evidence="4">
    <location>
        <begin position="218"/>
        <end position="270"/>
    </location>
</feature>
<feature type="region of interest" description="Disordered" evidence="4">
    <location>
        <begin position="291"/>
        <end position="344"/>
    </location>
</feature>
<feature type="region of interest" description="Disordered" evidence="4">
    <location>
        <begin position="372"/>
        <end position="391"/>
    </location>
</feature>
<feature type="region of interest" description="Disordered" evidence="4">
    <location>
        <begin position="527"/>
        <end position="546"/>
    </location>
</feature>
<feature type="coiled-coil region" evidence="1">
    <location>
        <begin position="48"/>
        <end position="124"/>
    </location>
</feature>
<feature type="compositionally biased region" description="Basic and acidic residues" evidence="4">
    <location>
        <begin position="1"/>
        <end position="18"/>
    </location>
</feature>
<feature type="compositionally biased region" description="Basic and acidic residues" evidence="4">
    <location>
        <begin position="242"/>
        <end position="258"/>
    </location>
</feature>
<feature type="compositionally biased region" description="Low complexity" evidence="4">
    <location>
        <begin position="302"/>
        <end position="312"/>
    </location>
</feature>
<feature type="modified residue" description="N-acetylalanine" evidence="8">
    <location>
        <position position="2"/>
    </location>
</feature>
<feature type="splice variant" id="VSP_061289" description="In isoform 1.">
    <original>GGGVAIKTEAQSED</original>
    <variation>GLALRTDLQGEAQI</variation>
    <location>
        <begin position="268"/>
        <end position="281"/>
    </location>
</feature>
<feature type="splice variant" id="VSP_061290" description="In isoform 1.">
    <location>
        <begin position="282"/>
        <end position="546"/>
    </location>
</feature>
<feature type="sequence variant" id="VAR_069466" description="In dbSNP:rs764239191." evidence="5">
    <original>R</original>
    <variation>C</variation>
    <location>
        <position position="63"/>
    </location>
</feature>
<gene>
    <name evidence="7" type="primary">ZNF783</name>
</gene>
<reference key="1">
    <citation type="journal article" date="2004" name="Nat. Genet.">
        <title>Complete sequencing and characterization of 21,243 full-length human cDNAs.</title>
        <authorList>
            <person name="Ota T."/>
            <person name="Suzuki Y."/>
            <person name="Nishikawa T."/>
            <person name="Otsuki T."/>
            <person name="Sugiyama T."/>
            <person name="Irie R."/>
            <person name="Wakamatsu A."/>
            <person name="Hayashi K."/>
            <person name="Sato H."/>
            <person name="Nagai K."/>
            <person name="Kimura K."/>
            <person name="Makita H."/>
            <person name="Sekine M."/>
            <person name="Obayashi M."/>
            <person name="Nishi T."/>
            <person name="Shibahara T."/>
            <person name="Tanaka T."/>
            <person name="Ishii S."/>
            <person name="Yamamoto J."/>
            <person name="Saito K."/>
            <person name="Kawai Y."/>
            <person name="Isono Y."/>
            <person name="Nakamura Y."/>
            <person name="Nagahari K."/>
            <person name="Murakami K."/>
            <person name="Yasuda T."/>
            <person name="Iwayanagi T."/>
            <person name="Wagatsuma M."/>
            <person name="Shiratori A."/>
            <person name="Sudo H."/>
            <person name="Hosoiri T."/>
            <person name="Kaku Y."/>
            <person name="Kodaira H."/>
            <person name="Kondo H."/>
            <person name="Sugawara M."/>
            <person name="Takahashi M."/>
            <person name="Kanda K."/>
            <person name="Yokoi T."/>
            <person name="Furuya T."/>
            <person name="Kikkawa E."/>
            <person name="Omura Y."/>
            <person name="Abe K."/>
            <person name="Kamihara K."/>
            <person name="Katsuta N."/>
            <person name="Sato K."/>
            <person name="Tanikawa M."/>
            <person name="Yamazaki M."/>
            <person name="Ninomiya K."/>
            <person name="Ishibashi T."/>
            <person name="Yamashita H."/>
            <person name="Murakawa K."/>
            <person name="Fujimori K."/>
            <person name="Tanai H."/>
            <person name="Kimata M."/>
            <person name="Watanabe M."/>
            <person name="Hiraoka S."/>
            <person name="Chiba Y."/>
            <person name="Ishida S."/>
            <person name="Ono Y."/>
            <person name="Takiguchi S."/>
            <person name="Watanabe S."/>
            <person name="Yosida M."/>
            <person name="Hotuta T."/>
            <person name="Kusano J."/>
            <person name="Kanehori K."/>
            <person name="Takahashi-Fujii A."/>
            <person name="Hara H."/>
            <person name="Tanase T.-O."/>
            <person name="Nomura Y."/>
            <person name="Togiya S."/>
            <person name="Komai F."/>
            <person name="Hara R."/>
            <person name="Takeuchi K."/>
            <person name="Arita M."/>
            <person name="Imose N."/>
            <person name="Musashino K."/>
            <person name="Yuuki H."/>
            <person name="Oshima A."/>
            <person name="Sasaki N."/>
            <person name="Aotsuka S."/>
            <person name="Yoshikawa Y."/>
            <person name="Matsunawa H."/>
            <person name="Ichihara T."/>
            <person name="Shiohata N."/>
            <person name="Sano S."/>
            <person name="Moriya S."/>
            <person name="Momiyama H."/>
            <person name="Satoh N."/>
            <person name="Takami S."/>
            <person name="Terashima Y."/>
            <person name="Suzuki O."/>
            <person name="Nakagawa S."/>
            <person name="Senoh A."/>
            <person name="Mizoguchi H."/>
            <person name="Goto Y."/>
            <person name="Shimizu F."/>
            <person name="Wakebe H."/>
            <person name="Hishigaki H."/>
            <person name="Watanabe T."/>
            <person name="Sugiyama A."/>
            <person name="Takemoto M."/>
            <person name="Kawakami B."/>
            <person name="Yamazaki M."/>
            <person name="Watanabe K."/>
            <person name="Kumagai A."/>
            <person name="Itakura S."/>
            <person name="Fukuzumi Y."/>
            <person name="Fujimori Y."/>
            <person name="Komiyama M."/>
            <person name="Tashiro H."/>
            <person name="Tanigami A."/>
            <person name="Fujiwara T."/>
            <person name="Ono T."/>
            <person name="Yamada K."/>
            <person name="Fujii Y."/>
            <person name="Ozaki K."/>
            <person name="Hirao M."/>
            <person name="Ohmori Y."/>
            <person name="Kawabata A."/>
            <person name="Hikiji T."/>
            <person name="Kobatake N."/>
            <person name="Inagaki H."/>
            <person name="Ikema Y."/>
            <person name="Okamoto S."/>
            <person name="Okitani R."/>
            <person name="Kawakami T."/>
            <person name="Noguchi S."/>
            <person name="Itoh T."/>
            <person name="Shigeta K."/>
            <person name="Senba T."/>
            <person name="Matsumura K."/>
            <person name="Nakajima Y."/>
            <person name="Mizuno T."/>
            <person name="Morinaga M."/>
            <person name="Sasaki M."/>
            <person name="Togashi T."/>
            <person name="Oyama M."/>
            <person name="Hata H."/>
            <person name="Watanabe M."/>
            <person name="Komatsu T."/>
            <person name="Mizushima-Sugano J."/>
            <person name="Satoh T."/>
            <person name="Shirai Y."/>
            <person name="Takahashi Y."/>
            <person name="Nakagawa K."/>
            <person name="Okumura K."/>
            <person name="Nagase T."/>
            <person name="Nomura N."/>
            <person name="Kikuchi H."/>
            <person name="Masuho Y."/>
            <person name="Yamashita R."/>
            <person name="Nakai K."/>
            <person name="Yada T."/>
            <person name="Nakamura Y."/>
            <person name="Ohara O."/>
            <person name="Isogai T."/>
            <person name="Sugano S."/>
        </authorList>
    </citation>
    <scope>NUCLEOTIDE SEQUENCE [LARGE SCALE MRNA] (ISOFORM 1)</scope>
    <source>
        <tissue>Uterus</tissue>
    </source>
</reference>
<reference key="2">
    <citation type="journal article" date="2003" name="Nature">
        <title>The DNA sequence of human chromosome 7.</title>
        <authorList>
            <person name="Hillier L.W."/>
            <person name="Fulton R.S."/>
            <person name="Fulton L.A."/>
            <person name="Graves T.A."/>
            <person name="Pepin K.H."/>
            <person name="Wagner-McPherson C."/>
            <person name="Layman D."/>
            <person name="Maas J."/>
            <person name="Jaeger S."/>
            <person name="Walker R."/>
            <person name="Wylie K."/>
            <person name="Sekhon M."/>
            <person name="Becker M.C."/>
            <person name="O'Laughlin M.D."/>
            <person name="Schaller M.E."/>
            <person name="Fewell G.A."/>
            <person name="Delehaunty K.D."/>
            <person name="Miner T.L."/>
            <person name="Nash W.E."/>
            <person name="Cordes M."/>
            <person name="Du H."/>
            <person name="Sun H."/>
            <person name="Edwards J."/>
            <person name="Bradshaw-Cordum H."/>
            <person name="Ali J."/>
            <person name="Andrews S."/>
            <person name="Isak A."/>
            <person name="Vanbrunt A."/>
            <person name="Nguyen C."/>
            <person name="Du F."/>
            <person name="Lamar B."/>
            <person name="Courtney L."/>
            <person name="Kalicki J."/>
            <person name="Ozersky P."/>
            <person name="Bielicki L."/>
            <person name="Scott K."/>
            <person name="Holmes A."/>
            <person name="Harkins R."/>
            <person name="Harris A."/>
            <person name="Strong C.M."/>
            <person name="Hou S."/>
            <person name="Tomlinson C."/>
            <person name="Dauphin-Kohlberg S."/>
            <person name="Kozlowicz-Reilly A."/>
            <person name="Leonard S."/>
            <person name="Rohlfing T."/>
            <person name="Rock S.M."/>
            <person name="Tin-Wollam A.-M."/>
            <person name="Abbott A."/>
            <person name="Minx P."/>
            <person name="Maupin R."/>
            <person name="Strowmatt C."/>
            <person name="Latreille P."/>
            <person name="Miller N."/>
            <person name="Johnson D."/>
            <person name="Murray J."/>
            <person name="Woessner J.P."/>
            <person name="Wendl M.C."/>
            <person name="Yang S.-P."/>
            <person name="Schultz B.R."/>
            <person name="Wallis J.W."/>
            <person name="Spieth J."/>
            <person name="Bieri T.A."/>
            <person name="Nelson J.O."/>
            <person name="Berkowicz N."/>
            <person name="Wohldmann P.E."/>
            <person name="Cook L.L."/>
            <person name="Hickenbotham M.T."/>
            <person name="Eldred J."/>
            <person name="Williams D."/>
            <person name="Bedell J.A."/>
            <person name="Mardis E.R."/>
            <person name="Clifton S.W."/>
            <person name="Chissoe S.L."/>
            <person name="Marra M.A."/>
            <person name="Raymond C."/>
            <person name="Haugen E."/>
            <person name="Gillett W."/>
            <person name="Zhou Y."/>
            <person name="James R."/>
            <person name="Phelps K."/>
            <person name="Iadanoto S."/>
            <person name="Bubb K."/>
            <person name="Simms E."/>
            <person name="Levy R."/>
            <person name="Clendenning J."/>
            <person name="Kaul R."/>
            <person name="Kent W.J."/>
            <person name="Furey T.S."/>
            <person name="Baertsch R.A."/>
            <person name="Brent M.R."/>
            <person name="Keibler E."/>
            <person name="Flicek P."/>
            <person name="Bork P."/>
            <person name="Suyama M."/>
            <person name="Bailey J.A."/>
            <person name="Portnoy M.E."/>
            <person name="Torrents D."/>
            <person name="Chinwalla A.T."/>
            <person name="Gish W.R."/>
            <person name="Eddy S.R."/>
            <person name="McPherson J.D."/>
            <person name="Olson M.V."/>
            <person name="Eichler E.E."/>
            <person name="Green E.D."/>
            <person name="Waterston R.H."/>
            <person name="Wilson R.K."/>
        </authorList>
    </citation>
    <scope>NUCLEOTIDE SEQUENCE [LARGE SCALE GENOMIC DNA]</scope>
</reference>
<reference key="3">
    <citation type="journal article" date="2009" name="Anal. Chem.">
        <title>Lys-N and trypsin cover complementary parts of the phosphoproteome in a refined SCX-based approach.</title>
        <authorList>
            <person name="Gauci S."/>
            <person name="Helbig A.O."/>
            <person name="Slijper M."/>
            <person name="Krijgsveld J."/>
            <person name="Heck A.J."/>
            <person name="Mohammed S."/>
        </authorList>
    </citation>
    <scope>ACETYLATION [LARGE SCALE ANALYSIS] AT ALA-2</scope>
    <scope>CLEAVAGE OF INITIATOR METHIONINE [LARGE SCALE ANALYSIS]</scope>
    <scope>IDENTIFICATION BY MASS SPECTROMETRY [LARGE SCALE ANALYSIS]</scope>
</reference>
<reference key="4">
    <citation type="journal article" date="2012" name="Am. J. Hum. Genet.">
        <title>Exome sequencing identifies PDE4D mutations in acrodysostosis.</title>
        <authorList>
            <person name="Lee H."/>
            <person name="Graham J.M. Jr."/>
            <person name="Rimoin D.L."/>
            <person name="Lachman R.S."/>
            <person name="Krejci P."/>
            <person name="Tompson S.W."/>
            <person name="Nelson S.F."/>
            <person name="Krakow D."/>
            <person name="Cohn D.H."/>
        </authorList>
    </citation>
    <scope>VARIANT CYS-63</scope>
</reference>
<protein>
    <recommendedName>
        <fullName evidence="7">Zinc finger protein 783</fullName>
    </recommendedName>
</protein>
<sequence length="546" mass="61014">MAEAAPARDPETDKHTEDQSPSTPLPQPAAEKNSYLYSTEITLWTVVAAIQALEKKVDSCLTRLLTLEGRTGTAEKKLADCEKTAVEFGNQLEGKWAVLGTLLQEYGLLQRRLENVENLLRNRNFWILRLPPGSKGEAPKVPVTFDDVAVYFSELEWGKLEDWQKELYKHVMRGNYETLVSLDYAISKPDILTRIERGEEPCLDRWGQEKGNEVEVGRPRMMGTGLPPYPEHLTSPLSPAQEELKEGQAPKQQQDSEARVAPAGPEAGGGVAIKTEAQSEDEMTPERLFLGVSRGQTECRIPRGPRNRPGGPSRHQAQGMPRVRAGEPRPPGASGETPRVLSRRRQRAFPCPDCGQSFRLKINLTIHQRTHVEEGRQEAPGRSPTSCGDSQAMLEPGEVVVPGPVIRWLPEEPEGRRSVAGGRALVGRRPAASKMYHCSECLRFFQQRKSLLLHQRLHTGNGQGWPACPYCGKAFRRPSDLFRHQRIHTGERPYQCPQCGRTFNRNHHLAVHMQTHARGQVGPHFPAAPARHGSLPLPWPSRKEEG</sequence>
<comment type="function">
    <text>May be involved in transcriptional regulation.</text>
</comment>
<comment type="interaction">
    <interactant intactId="EBI-10254978">
        <id>Q6ZMS7</id>
    </interactant>
    <interactant intactId="EBI-10290304">
        <id>Q96KN8-3</id>
        <label>PLAAT5</label>
    </interactant>
    <organismsDiffer>false</organismsDiffer>
    <experiments>3</experiments>
</comment>
<comment type="interaction">
    <interactant intactId="EBI-10254978">
        <id>Q6ZMS7</id>
    </interactant>
    <interactant intactId="EBI-1640204">
        <id>Q9UDV6</id>
        <label>ZNF212</label>
    </interactant>
    <organismsDiffer>false</organismsDiffer>
    <experiments>5</experiments>
</comment>
<comment type="interaction">
    <interactant intactId="EBI-10254978">
        <id>Q6ZMS7</id>
    </interactant>
    <interactant intactId="EBI-8643207">
        <id>Q8TD17</id>
        <label>ZNF398</label>
    </interactant>
    <organismsDiffer>false</organismsDiffer>
    <experiments>5</experiments>
</comment>
<comment type="interaction">
    <interactant intactId="EBI-17789949">
        <id>Q6ZMS7-2</id>
    </interactant>
    <interactant intactId="EBI-353901">
        <id>Q7L2H7</id>
        <label>EIF3M</label>
    </interactant>
    <organismsDiffer>false</organismsDiffer>
    <experiments>3</experiments>
</comment>
<comment type="interaction">
    <interactant intactId="EBI-17789949">
        <id>Q6ZMS7-2</id>
    </interactant>
    <interactant intactId="EBI-714158">
        <id>Q13526</id>
        <label>PIN1</label>
    </interactant>
    <organismsDiffer>false</organismsDiffer>
    <experiments>3</experiments>
</comment>
<comment type="interaction">
    <interactant intactId="EBI-17789949">
        <id>Q6ZMS7-2</id>
    </interactant>
    <interactant intactId="EBI-1640204">
        <id>Q9UDV6</id>
        <label>ZNF212</label>
    </interactant>
    <organismsDiffer>false</organismsDiffer>
    <experiments>3</experiments>
</comment>
<comment type="interaction">
    <interactant intactId="EBI-17789949">
        <id>Q6ZMS7-2</id>
    </interactant>
    <interactant intactId="EBI-8643207">
        <id>Q8TD17</id>
        <label>ZNF398</label>
    </interactant>
    <organismsDiffer>false</organismsDiffer>
    <experiments>3</experiments>
</comment>
<comment type="interaction">
    <interactant intactId="EBI-17789949">
        <id>Q6ZMS7-2</id>
    </interactant>
    <interactant intactId="EBI-17789949">
        <id>Q6ZMS7-2</id>
        <label>ZNF783</label>
    </interactant>
    <organismsDiffer>false</organismsDiffer>
    <experiments>3</experiments>
</comment>
<comment type="subcellular location">
    <subcellularLocation>
        <location evidence="6">Nucleus</location>
    </subcellularLocation>
</comment>
<comment type="alternative products">
    <event type="alternative splicing"/>
    <isoform>
        <id>Q6ZMS7-2</id>
        <name>2</name>
        <sequence type="displayed"/>
    </isoform>
    <isoform>
        <id>Q6ZMS7-1</id>
        <name>1</name>
        <sequence type="described" ref="VSP_061289 VSP_061290"/>
    </isoform>
</comment>
<comment type="miscellaneous">
    <molecule>Isoform 2</molecule>
    <text evidence="6">Gene prediction based on partial EST data.</text>
</comment>
<comment type="miscellaneous">
    <molecule>Isoform 1</molecule>
    <text evidence="6">May be produced at very low levels due to a premature stop codon in the mRNA, leading to nonsense-mediated mRNA decay.</text>
</comment>
<name>ZN783_HUMAN</name>
<keyword id="KW-0007">Acetylation</keyword>
<keyword id="KW-0025">Alternative splicing</keyword>
<keyword id="KW-0175">Coiled coil</keyword>
<keyword id="KW-0238">DNA-binding</keyword>
<keyword id="KW-0479">Metal-binding</keyword>
<keyword id="KW-0539">Nucleus</keyword>
<keyword id="KW-1267">Proteomics identification</keyword>
<keyword id="KW-1185">Reference proteome</keyword>
<keyword id="KW-0677">Repeat</keyword>
<keyword id="KW-0804">Transcription</keyword>
<keyword id="KW-0805">Transcription regulation</keyword>
<keyword id="KW-0862">Zinc</keyword>
<keyword id="KW-0863">Zinc-finger</keyword>
<evidence type="ECO:0000255" key="1"/>
<evidence type="ECO:0000255" key="2">
    <source>
        <dbReference type="PROSITE-ProRule" id="PRU00042"/>
    </source>
</evidence>
<evidence type="ECO:0000255" key="3">
    <source>
        <dbReference type="PROSITE-ProRule" id="PRU00119"/>
    </source>
</evidence>
<evidence type="ECO:0000256" key="4">
    <source>
        <dbReference type="SAM" id="MobiDB-lite"/>
    </source>
</evidence>
<evidence type="ECO:0000269" key="5">
    <source>
    </source>
</evidence>
<evidence type="ECO:0000305" key="6"/>
<evidence type="ECO:0000312" key="7">
    <source>
        <dbReference type="HGNC" id="HGNC:27222"/>
    </source>
</evidence>
<evidence type="ECO:0007744" key="8">
    <source>
    </source>
</evidence>